<feature type="chain" id="PRO_0000116135" description="Envelope protein US9 homolog">
    <location>
        <begin position="1"/>
        <end position="219"/>
    </location>
</feature>
<feature type="topological domain" description="Intravirion" evidence="1">
    <location>
        <begin position="1"/>
        <end position="193"/>
    </location>
</feature>
<feature type="transmembrane region" description="Helical; Signal-anchor for type II membrane protein" evidence="1">
    <location>
        <begin position="194"/>
        <end position="214"/>
    </location>
</feature>
<feature type="topological domain" description="Virion surface" evidence="1">
    <location>
        <begin position="215"/>
        <end position="219"/>
    </location>
</feature>
<feature type="region of interest" description="Acidic">
    <location>
        <begin position="153"/>
        <end position="168"/>
    </location>
</feature>
<feature type="short sequence motif" description="Di-leucine internalization motif" evidence="2">
    <location>
        <begin position="145"/>
        <end position="146"/>
    </location>
</feature>
<feature type="modified residue" description="Phosphoserine; by host CK2" evidence="2">
    <location>
        <position position="163"/>
    </location>
</feature>
<feature type="modified residue" description="Phosphoserine; by host CK2" evidence="2">
    <location>
        <position position="165"/>
    </location>
</feature>
<organism>
    <name type="scientific">Equine herpesvirus 1 (strain Kentucky A)</name>
    <name type="common">EHV-1</name>
    <name type="synonym">Equine abortion virus</name>
    <dbReference type="NCBI Taxonomy" id="10329"/>
    <lineage>
        <taxon>Viruses</taxon>
        <taxon>Duplodnaviria</taxon>
        <taxon>Heunggongvirae</taxon>
        <taxon>Peploviricota</taxon>
        <taxon>Herviviricetes</taxon>
        <taxon>Herpesvirales</taxon>
        <taxon>Orthoherpesviridae</taxon>
        <taxon>Alphaherpesvirinae</taxon>
        <taxon>Varicellovirus</taxon>
        <taxon>Varicellovirus equidalpha1</taxon>
        <taxon>Equid alphaherpesvirus 1</taxon>
    </lineage>
</organism>
<reference key="1">
    <citation type="journal article" date="1992" name="Virology">
        <title>The equine herpesvirus type 1 (EHV-1) homolog of herpes simplex virus type 1 US9 and the nature of a major deletion within the unique short segment of the EHV-1 KyA strain genome.</title>
        <authorList>
            <person name="Flowers C.C."/>
            <person name="O'Callaghan D.J."/>
        </authorList>
    </citation>
    <scope>NUCLEOTIDE SEQUENCE [GENOMIC DNA]</scope>
</reference>
<reference key="2">
    <citation type="journal article" date="1992" name="Virology">
        <title>Open reading frames encoding a protein kinase, homolog of glycoprotein gX of pseudorabies virus, and a novel glycoprotein map within the unique short segment of equine herpesvirus type 1.</title>
        <authorList>
            <person name="Colle C.F. III"/>
            <person name="Flowers C.C."/>
            <person name="O'Callaghan D.J."/>
        </authorList>
    </citation>
    <scope>NUCLEOTIDE SEQUENCE [GENOMIC DNA]</scope>
</reference>
<reference key="3">
    <citation type="journal article" date="2009" name="J. Virol.">
        <title>Comparison of the pseudorabies virus Us9 protein with homologs from other veterinary and human alphaherpesviruses.</title>
        <authorList>
            <person name="Lyman M.G."/>
            <person name="Kemp C.D."/>
            <person name="Taylor M.P."/>
            <person name="Enquist L.W."/>
        </authorList>
    </citation>
    <scope>TOPOLOGY</scope>
    <scope>SUBCELLULAR LOCATION</scope>
</reference>
<gene>
    <name type="ordered locus">76</name>
</gene>
<sequence length="219" mass="22358">MEKAEAAAVVIPLSVSNPSYRGSGMSDQEVSEEQSAGDAWVSAAMAAAEAVAAAATSTGIDNTNDYTYTAASENGDPGFTLGDNTYGPNGAASGCPSPPSPEVVGLEMVVVSSLAPEIAAAVPADTISASAAAPATRVDDGNAPLLGPGQAQDYDSESGCYYSESDNETASMFIRRVGRRQARRHRRRRVALTVAGVILVVVLCAISGIVGAFLARVFP</sequence>
<proteinExistence type="evidence at protein level"/>
<organismHost>
    <name type="scientific">Equus caballus</name>
    <name type="common">Horse</name>
    <dbReference type="NCBI Taxonomy" id="9796"/>
</organismHost>
<keyword id="KW-1032">Host cell membrane</keyword>
<keyword id="KW-1038">Host endoplasmic reticulum</keyword>
<keyword id="KW-1040">Host Golgi apparatus</keyword>
<keyword id="KW-1043">Host membrane</keyword>
<keyword id="KW-0472">Membrane</keyword>
<keyword id="KW-0597">Phosphoprotein</keyword>
<keyword id="KW-0735">Signal-anchor</keyword>
<keyword id="KW-0812">Transmembrane</keyword>
<keyword id="KW-1133">Transmembrane helix</keyword>
<keyword id="KW-0261">Viral envelope protein</keyword>
<keyword id="KW-0946">Virion</keyword>
<evidence type="ECO:0000250" key="1"/>
<evidence type="ECO:0000255" key="2"/>
<evidence type="ECO:0000269" key="3">
    <source>
    </source>
</evidence>
<evidence type="ECO:0000305" key="4"/>
<name>US9_EHV1K</name>
<comment type="function">
    <text evidence="1">Essential for the anterograde spread of the infection throughout the host nervous system. Together with the gE/gI heterodimer, US9 is involved in the sorting and transport of viral structural components toward axon tips (By similarity).</text>
</comment>
<comment type="subcellular location">
    <subcellularLocation>
        <location evidence="1">Virion membrane</location>
        <topology evidence="1">Single-pass type II membrane protein</topology>
    </subcellularLocation>
    <subcellularLocation>
        <location evidence="3">Host Golgi apparatus membrane</location>
        <topology evidence="3">Single-pass type II membrane protein</topology>
    </subcellularLocation>
    <subcellularLocation>
        <location evidence="1">Host smooth endoplasmic reticulum membrane</location>
        <topology evidence="1">Single-pass type II membrane protein</topology>
    </subcellularLocation>
    <subcellularLocation>
        <location evidence="4">Host cell membrane</location>
        <topology evidence="4">Single-pass type II membrane protein</topology>
    </subcellularLocation>
    <text>During virion morphogenesis, this protein probably accumulates in the endosomes and trans-Golgi where secondary envelopment occurs. It is probably transported to the cell surface from where it is endocytosed and directed to the trans-Golgi network (TGN), maybe through an interaction with PACS-1 sorting protein.</text>
</comment>
<comment type="PTM">
    <text evidence="4">Phosphorylated on serines within the acidic cluster. Phosphorylation determines whether endocytosed viral US9 traffics to the trans-Golgi network or recycles to the cell membrane.</text>
</comment>
<comment type="similarity">
    <text evidence="4">Belongs to the alphaherpesvirinae envelope protein US9 family.</text>
</comment>
<protein>
    <recommendedName>
        <fullName>Envelope protein US9 homolog</fullName>
    </recommendedName>
    <alternativeName>
        <fullName>Envelope protein 76</fullName>
    </alternativeName>
    <alternativeName>
        <fullName>ORF76 protein</fullName>
    </alternativeName>
</protein>
<accession>P32513</accession>
<dbReference type="EMBL" id="M86931">
    <property type="protein sequence ID" value="AAA46105.1"/>
    <property type="molecule type" value="Genomic_DNA"/>
</dbReference>
<dbReference type="EMBL" id="M87497">
    <property type="protein sequence ID" value="AAA46074.1"/>
    <property type="molecule type" value="Genomic_DNA"/>
</dbReference>
<dbReference type="PIR" id="A43378">
    <property type="entry name" value="TEBEKA"/>
</dbReference>
<dbReference type="SMR" id="P32513"/>
<dbReference type="GO" id="GO:0043657">
    <property type="term" value="C:host cell"/>
    <property type="evidence" value="ECO:0007669"/>
    <property type="project" value="GOC"/>
</dbReference>
<dbReference type="GO" id="GO:0044178">
    <property type="term" value="C:host cell Golgi membrane"/>
    <property type="evidence" value="ECO:0007669"/>
    <property type="project" value="UniProtKB-SubCell"/>
</dbReference>
<dbReference type="GO" id="GO:0020002">
    <property type="term" value="C:host cell plasma membrane"/>
    <property type="evidence" value="ECO:0007669"/>
    <property type="project" value="UniProtKB-SubCell"/>
</dbReference>
<dbReference type="GO" id="GO:0044171">
    <property type="term" value="C:host cell smooth endoplasmic reticulum membrane"/>
    <property type="evidence" value="ECO:0007669"/>
    <property type="project" value="UniProtKB-SubCell"/>
</dbReference>
<dbReference type="GO" id="GO:0016020">
    <property type="term" value="C:membrane"/>
    <property type="evidence" value="ECO:0007669"/>
    <property type="project" value="UniProtKB-KW"/>
</dbReference>
<dbReference type="GO" id="GO:0019031">
    <property type="term" value="C:viral envelope"/>
    <property type="evidence" value="ECO:0007669"/>
    <property type="project" value="UniProtKB-KW"/>
</dbReference>
<dbReference type="GO" id="GO:0055036">
    <property type="term" value="C:virion membrane"/>
    <property type="evidence" value="ECO:0007669"/>
    <property type="project" value="UniProtKB-SubCell"/>
</dbReference>
<dbReference type="GO" id="GO:0075733">
    <property type="term" value="P:intracellular transport of virus"/>
    <property type="evidence" value="ECO:0007669"/>
    <property type="project" value="InterPro"/>
</dbReference>
<dbReference type="InterPro" id="IPR009278">
    <property type="entry name" value="Herpes_US9"/>
</dbReference>
<dbReference type="Pfam" id="PF06072">
    <property type="entry name" value="Herpes_US9"/>
    <property type="match status" value="1"/>
</dbReference>